<gene>
    <name type="ORF">FG08083</name>
    <name type="ORF">FGRAMPH1_01T09075</name>
</gene>
<proteinExistence type="evidence at transcript level"/>
<evidence type="ECO:0000250" key="1">
    <source>
        <dbReference type="UniProtKB" id="Q99259"/>
    </source>
</evidence>
<evidence type="ECO:0000256" key="2">
    <source>
        <dbReference type="SAM" id="MobiDB-lite"/>
    </source>
</evidence>
<evidence type="ECO:0000269" key="3">
    <source>
    </source>
</evidence>
<evidence type="ECO:0000303" key="4">
    <source>
    </source>
</evidence>
<evidence type="ECO:0000305" key="5"/>
<evidence type="ECO:0000305" key="6">
    <source>
    </source>
</evidence>
<protein>
    <recommendedName>
        <fullName evidence="4">Glutamate decarboxylase-like protein FG08083</fullName>
        <ecNumber evidence="6">4.1.1.-</ecNumber>
    </recommendedName>
    <alternativeName>
        <fullName evidence="4">Butenolide biosynthesis cluster protein FG08083</fullName>
    </alternativeName>
</protein>
<keyword id="KW-0210">Decarboxylase</keyword>
<keyword id="KW-0456">Lyase</keyword>
<keyword id="KW-0663">Pyridoxal phosphate</keyword>
<keyword id="KW-1185">Reference proteome</keyword>
<dbReference type="EC" id="4.1.1.-" evidence="6"/>
<dbReference type="EMBL" id="HG970333">
    <property type="protein sequence ID" value="CEF76340.1"/>
    <property type="molecule type" value="Genomic_DNA"/>
</dbReference>
<dbReference type="RefSeq" id="XP_011320739.1">
    <property type="nucleotide sequence ID" value="XM_011322437.1"/>
</dbReference>
<dbReference type="SMR" id="I1RV23"/>
<dbReference type="STRING" id="229533.I1RV23"/>
<dbReference type="KEGG" id="fgr:FGSG_08083"/>
<dbReference type="VEuPathDB" id="FungiDB:FGRAMPH1_01G09075"/>
<dbReference type="eggNOG" id="KOG0629">
    <property type="taxonomic scope" value="Eukaryota"/>
</dbReference>
<dbReference type="HOGENOM" id="CLU_011856_0_0_1"/>
<dbReference type="InParanoid" id="I1RV23"/>
<dbReference type="OrthoDB" id="140565at110618"/>
<dbReference type="Proteomes" id="UP000070720">
    <property type="component" value="Chromosome 2"/>
</dbReference>
<dbReference type="GO" id="GO:0005737">
    <property type="term" value="C:cytoplasm"/>
    <property type="evidence" value="ECO:0007669"/>
    <property type="project" value="TreeGrafter"/>
</dbReference>
<dbReference type="GO" id="GO:0016831">
    <property type="term" value="F:carboxy-lyase activity"/>
    <property type="evidence" value="ECO:0007669"/>
    <property type="project" value="UniProtKB-KW"/>
</dbReference>
<dbReference type="GO" id="GO:0030170">
    <property type="term" value="F:pyridoxal phosphate binding"/>
    <property type="evidence" value="ECO:0007669"/>
    <property type="project" value="InterPro"/>
</dbReference>
<dbReference type="GO" id="GO:0019752">
    <property type="term" value="P:carboxylic acid metabolic process"/>
    <property type="evidence" value="ECO:0007669"/>
    <property type="project" value="InterPro"/>
</dbReference>
<dbReference type="Gene3D" id="3.90.1150.170">
    <property type="match status" value="1"/>
</dbReference>
<dbReference type="Gene3D" id="3.40.640.10">
    <property type="entry name" value="Type I PLP-dependent aspartate aminotransferase-like (Major domain)"/>
    <property type="match status" value="1"/>
</dbReference>
<dbReference type="InterPro" id="IPR002129">
    <property type="entry name" value="PyrdxlP-dep_de-COase"/>
</dbReference>
<dbReference type="InterPro" id="IPR015424">
    <property type="entry name" value="PyrdxlP-dep_Trfase"/>
</dbReference>
<dbReference type="InterPro" id="IPR015421">
    <property type="entry name" value="PyrdxlP-dep_Trfase_major"/>
</dbReference>
<dbReference type="PANTHER" id="PTHR45677:SF8">
    <property type="entry name" value="CYSTEINE SULFINIC ACID DECARBOXYLASE"/>
    <property type="match status" value="1"/>
</dbReference>
<dbReference type="PANTHER" id="PTHR45677">
    <property type="entry name" value="GLUTAMATE DECARBOXYLASE-RELATED"/>
    <property type="match status" value="1"/>
</dbReference>
<dbReference type="Pfam" id="PF00282">
    <property type="entry name" value="Pyridoxal_deC"/>
    <property type="match status" value="2"/>
</dbReference>
<dbReference type="SUPFAM" id="SSF53383">
    <property type="entry name" value="PLP-dependent transferases"/>
    <property type="match status" value="1"/>
</dbReference>
<comment type="function">
    <text evidence="3 6">Glutamate decarboxylase-like protein; part of the gene cluster that mediates the biosynthesis of butenolide, a mycotoxin that shows antibiotic activity but does not seem to play a major role in the spread of head blight in wheat (PubMed:17175185). Butenolide is derived from glutamic acid via a 4-acetamido-2-butenoic acid intermediate (Probable). The predicted function of the NADH:flavin oxidoreductase FG08077, the cytochrome P450 monooxygenase FG08079, the decarboxylase FG08083, and the putative acetyltransferase FG08082 are consistent with this pathway, however, the respective activities of the butelonide biosynthesis cluster enzymes have still to be experimentally determined (Probable).</text>
</comment>
<comment type="cofactor">
    <cofactor evidence="1">
        <name>pyridoxal 5'-phosphate</name>
        <dbReference type="ChEBI" id="CHEBI:597326"/>
    </cofactor>
</comment>
<comment type="pathway">
    <text evidence="6">Mycotoxin biosynthesis.</text>
</comment>
<comment type="induction">
    <text evidence="3">Highly expressed under trichothecene-producing conditions.</text>
</comment>
<comment type="similarity">
    <text evidence="5">Belongs to the group II decarboxylase family.</text>
</comment>
<accession>I1RV23</accession>
<organism>
    <name type="scientific">Gibberella zeae (strain ATCC MYA-4620 / CBS 123657 / FGSC 9075 / NRRL 31084 / PH-1)</name>
    <name type="common">Wheat head blight fungus</name>
    <name type="synonym">Fusarium graminearum</name>
    <dbReference type="NCBI Taxonomy" id="229533"/>
    <lineage>
        <taxon>Eukaryota</taxon>
        <taxon>Fungi</taxon>
        <taxon>Dikarya</taxon>
        <taxon>Ascomycota</taxon>
        <taxon>Pezizomycotina</taxon>
        <taxon>Sordariomycetes</taxon>
        <taxon>Hypocreomycetidae</taxon>
        <taxon>Hypocreales</taxon>
        <taxon>Nectriaceae</taxon>
        <taxon>Fusarium</taxon>
    </lineage>
</organism>
<feature type="chain" id="PRO_0000450728" description="Glutamate decarboxylase-like protein FG08083">
    <location>
        <begin position="1"/>
        <end position="520"/>
    </location>
</feature>
<feature type="region of interest" description="Disordered" evidence="2">
    <location>
        <begin position="338"/>
        <end position="357"/>
    </location>
</feature>
<feature type="compositionally biased region" description="Polar residues" evidence="2">
    <location>
        <begin position="340"/>
        <end position="351"/>
    </location>
</feature>
<feature type="binding site" evidence="1">
    <location>
        <begin position="86"/>
        <end position="88"/>
    </location>
    <ligand>
        <name>substrate</name>
    </ligand>
</feature>
<feature type="binding site" evidence="1">
    <location>
        <position position="492"/>
    </location>
    <ligand>
        <name>substrate</name>
    </ligand>
</feature>
<feature type="modified residue" description="N6-(pyridoxal phosphate)lysine" evidence="1">
    <location>
        <position position="300"/>
    </location>
</feature>
<name>BUT83_GIBZE</name>
<sequence length="520" mass="56206">MDNGLSRRHEISELLQLVDSTTTRAFHTSNGSPKSDCRNDSKPLKRYEELFGSFPAEGLGTSGFKDAIDLISRNSVDNASPGFLGKLVSAPSAPGIASDLFLSILNNNGHVQRAGPALTAIEKHTSLELARLFDLQGPHAGGVTVPGGAAGNLMAMLVARNIVAPESKQRGLTPGEYAIFVSDAAHYSVSNSANVIGLGNDSIIRVPALDDGTMDADALQRAVDQAGKDGKKPLLIAATSGSTVNGAFDPLDKIGEIAHRVGAWFHVDACWGGGVVFSDKLKHLMKGSHLADSIAFNPHKLLGVPLVCAFLLVNDLRTLWLANKLNAGYLFHDDAPKKNGVSSEQSANTNGSEKESWRHSKLLDTAPDVMKINDLASLTIQCSRRHDATKMFLHWLYYGTAGIAREVEQAVDSAKHLACLVRDHPRFELIWDPEQVFAQVCFYWKSASTPEKSGETLAEINSRNTRALFQGIEEMGWKVDFAPGKAKGEFLRIACNRLTTRQTVEKIVSELVELGESLGL</sequence>
<reference key="1">
    <citation type="journal article" date="2007" name="Science">
        <title>The Fusarium graminearum genome reveals a link between localized polymorphism and pathogen specialization.</title>
        <authorList>
            <person name="Cuomo C.A."/>
            <person name="Gueldener U."/>
            <person name="Xu J.-R."/>
            <person name="Trail F."/>
            <person name="Turgeon B.G."/>
            <person name="Di Pietro A."/>
            <person name="Walton J.D."/>
            <person name="Ma L.-J."/>
            <person name="Baker S.E."/>
            <person name="Rep M."/>
            <person name="Adam G."/>
            <person name="Antoniw J."/>
            <person name="Baldwin T."/>
            <person name="Calvo S.E."/>
            <person name="Chang Y.-L."/>
            <person name="DeCaprio D."/>
            <person name="Gale L.R."/>
            <person name="Gnerre S."/>
            <person name="Goswami R.S."/>
            <person name="Hammond-Kosack K."/>
            <person name="Harris L.J."/>
            <person name="Hilburn K."/>
            <person name="Kennell J.C."/>
            <person name="Kroken S."/>
            <person name="Magnuson J.K."/>
            <person name="Mannhaupt G."/>
            <person name="Mauceli E.W."/>
            <person name="Mewes H.-W."/>
            <person name="Mitterbauer R."/>
            <person name="Muehlbauer G."/>
            <person name="Muensterkoetter M."/>
            <person name="Nelson D."/>
            <person name="O'Donnell K."/>
            <person name="Ouellet T."/>
            <person name="Qi W."/>
            <person name="Quesneville H."/>
            <person name="Roncero M.I.G."/>
            <person name="Seong K.-Y."/>
            <person name="Tetko I.V."/>
            <person name="Urban M."/>
            <person name="Waalwijk C."/>
            <person name="Ward T.J."/>
            <person name="Yao J."/>
            <person name="Birren B.W."/>
            <person name="Kistler H.C."/>
        </authorList>
    </citation>
    <scope>NUCLEOTIDE SEQUENCE [LARGE SCALE GENOMIC DNA]</scope>
    <source>
        <strain>ATCC MYA-4620 / CBS 123657 / FGSC 9075 / NRRL 31084 / PH-1</strain>
    </source>
</reference>
<reference key="2">
    <citation type="journal article" date="2010" name="Nature">
        <title>Comparative genomics reveals mobile pathogenicity chromosomes in Fusarium.</title>
        <authorList>
            <person name="Ma L.-J."/>
            <person name="van der Does H.C."/>
            <person name="Borkovich K.A."/>
            <person name="Coleman J.J."/>
            <person name="Daboussi M.-J."/>
            <person name="Di Pietro A."/>
            <person name="Dufresne M."/>
            <person name="Freitag M."/>
            <person name="Grabherr M."/>
            <person name="Henrissat B."/>
            <person name="Houterman P.M."/>
            <person name="Kang S."/>
            <person name="Shim W.-B."/>
            <person name="Woloshuk C."/>
            <person name="Xie X."/>
            <person name="Xu J.-R."/>
            <person name="Antoniw J."/>
            <person name="Baker S.E."/>
            <person name="Bluhm B.H."/>
            <person name="Breakspear A."/>
            <person name="Brown D.W."/>
            <person name="Butchko R.A.E."/>
            <person name="Chapman S."/>
            <person name="Coulson R."/>
            <person name="Coutinho P.M."/>
            <person name="Danchin E.G.J."/>
            <person name="Diener A."/>
            <person name="Gale L.R."/>
            <person name="Gardiner D.M."/>
            <person name="Goff S."/>
            <person name="Hammond-Kosack K.E."/>
            <person name="Hilburn K."/>
            <person name="Hua-Van A."/>
            <person name="Jonkers W."/>
            <person name="Kazan K."/>
            <person name="Kodira C.D."/>
            <person name="Koehrsen M."/>
            <person name="Kumar L."/>
            <person name="Lee Y.-H."/>
            <person name="Li L."/>
            <person name="Manners J.M."/>
            <person name="Miranda-Saavedra D."/>
            <person name="Mukherjee M."/>
            <person name="Park G."/>
            <person name="Park J."/>
            <person name="Park S.-Y."/>
            <person name="Proctor R.H."/>
            <person name="Regev A."/>
            <person name="Ruiz-Roldan M.C."/>
            <person name="Sain D."/>
            <person name="Sakthikumar S."/>
            <person name="Sykes S."/>
            <person name="Schwartz D.C."/>
            <person name="Turgeon B.G."/>
            <person name="Wapinski I."/>
            <person name="Yoder O."/>
            <person name="Young S."/>
            <person name="Zeng Q."/>
            <person name="Zhou S."/>
            <person name="Galagan J."/>
            <person name="Cuomo C.A."/>
            <person name="Kistler H.C."/>
            <person name="Rep M."/>
        </authorList>
    </citation>
    <scope>GENOME REANNOTATION</scope>
    <source>
        <strain>ATCC MYA-4620 / CBS 123657 / FGSC 9075 / NRRL 31084 / PH-1</strain>
    </source>
</reference>
<reference key="3">
    <citation type="journal article" date="2015" name="BMC Genomics">
        <title>The completed genome sequence of the pathogenic ascomycete fungus Fusarium graminearum.</title>
        <authorList>
            <person name="King R."/>
            <person name="Urban M."/>
            <person name="Hammond-Kosack M.C.U."/>
            <person name="Hassani-Pak K."/>
            <person name="Hammond-Kosack K.E."/>
        </authorList>
    </citation>
    <scope>NUCLEOTIDE SEQUENCE [LARGE SCALE GENOMIC DNA]</scope>
    <source>
        <strain>ATCC MYA-4620 / CBS 123657 / FGSC 9075 / NRRL 31084 / PH-1</strain>
    </source>
</reference>
<reference key="4">
    <citation type="journal article" date="2007" name="Fungal Genet. Biol.">
        <title>A novel gene cluster in Fusarium graminearum contains a gene that contributes to butenolide synthesis.</title>
        <authorList>
            <person name="Harris L.J."/>
            <person name="Alexander N.J."/>
            <person name="Saparno A."/>
            <person name="Blackwell B."/>
            <person name="McCormick S.P."/>
            <person name="Desjardins A.E."/>
            <person name="Robert L.S."/>
            <person name="Tinker N."/>
            <person name="Hattori J."/>
            <person name="Piche C."/>
            <person name="Schernthaner J.P."/>
            <person name="Watson R."/>
            <person name="Ouellet T."/>
        </authorList>
    </citation>
    <scope>FUNCTION</scope>
    <scope>INDUCTION</scope>
    <scope>PATHWAY</scope>
</reference>